<organism>
    <name type="scientific">Xylella fastidiosa (strain 9a5c)</name>
    <dbReference type="NCBI Taxonomy" id="160492"/>
    <lineage>
        <taxon>Bacteria</taxon>
        <taxon>Pseudomonadati</taxon>
        <taxon>Pseudomonadota</taxon>
        <taxon>Gammaproteobacteria</taxon>
        <taxon>Lysobacterales</taxon>
        <taxon>Lysobacteraceae</taxon>
        <taxon>Xylella</taxon>
    </lineage>
</organism>
<comment type="function">
    <text evidence="1">Participates in transcription elongation, termination and antitermination.</text>
</comment>
<comment type="similarity">
    <text evidence="1">Belongs to the NusG family.</text>
</comment>
<proteinExistence type="inferred from homology"/>
<dbReference type="EMBL" id="AE003849">
    <property type="protein sequence ID" value="AAF85435.1"/>
    <property type="molecule type" value="Genomic_DNA"/>
</dbReference>
<dbReference type="PIR" id="G82531">
    <property type="entry name" value="G82531"/>
</dbReference>
<dbReference type="RefSeq" id="WP_004084694.1">
    <property type="nucleotide sequence ID" value="NC_002488.3"/>
</dbReference>
<dbReference type="SMR" id="Q9PA81"/>
<dbReference type="STRING" id="160492.XF_2638"/>
<dbReference type="KEGG" id="xfa:XF_2638"/>
<dbReference type="eggNOG" id="COG0250">
    <property type="taxonomic scope" value="Bacteria"/>
</dbReference>
<dbReference type="HOGENOM" id="CLU_067287_1_0_6"/>
<dbReference type="Proteomes" id="UP000000812">
    <property type="component" value="Chromosome"/>
</dbReference>
<dbReference type="GO" id="GO:0005829">
    <property type="term" value="C:cytosol"/>
    <property type="evidence" value="ECO:0007669"/>
    <property type="project" value="TreeGrafter"/>
</dbReference>
<dbReference type="GO" id="GO:0006353">
    <property type="term" value="P:DNA-templated transcription termination"/>
    <property type="evidence" value="ECO:0007669"/>
    <property type="project" value="UniProtKB-UniRule"/>
</dbReference>
<dbReference type="GO" id="GO:0032784">
    <property type="term" value="P:regulation of DNA-templated transcription elongation"/>
    <property type="evidence" value="ECO:0007669"/>
    <property type="project" value="InterPro"/>
</dbReference>
<dbReference type="GO" id="GO:0031564">
    <property type="term" value="P:transcription antitermination"/>
    <property type="evidence" value="ECO:0007669"/>
    <property type="project" value="UniProtKB-UniRule"/>
</dbReference>
<dbReference type="GO" id="GO:0140673">
    <property type="term" value="P:transcription elongation-coupled chromatin remodeling"/>
    <property type="evidence" value="ECO:0007669"/>
    <property type="project" value="InterPro"/>
</dbReference>
<dbReference type="CDD" id="cd06091">
    <property type="entry name" value="KOW_NusG"/>
    <property type="match status" value="1"/>
</dbReference>
<dbReference type="CDD" id="cd09891">
    <property type="entry name" value="NGN_Bact_1"/>
    <property type="match status" value="1"/>
</dbReference>
<dbReference type="FunFam" id="2.30.30.30:FF:000002">
    <property type="entry name" value="Transcription termination/antitermination factor NusG"/>
    <property type="match status" value="1"/>
</dbReference>
<dbReference type="FunFam" id="3.30.70.940:FF:000001">
    <property type="entry name" value="Transcription termination/antitermination protein NusG"/>
    <property type="match status" value="1"/>
</dbReference>
<dbReference type="Gene3D" id="2.30.30.30">
    <property type="match status" value="1"/>
</dbReference>
<dbReference type="Gene3D" id="3.30.70.940">
    <property type="entry name" value="NusG, N-terminal domain"/>
    <property type="match status" value="1"/>
</dbReference>
<dbReference type="HAMAP" id="MF_00948">
    <property type="entry name" value="NusG"/>
    <property type="match status" value="1"/>
</dbReference>
<dbReference type="InterPro" id="IPR005824">
    <property type="entry name" value="KOW"/>
</dbReference>
<dbReference type="InterPro" id="IPR047050">
    <property type="entry name" value="NGN"/>
</dbReference>
<dbReference type="InterPro" id="IPR006645">
    <property type="entry name" value="NGN-like_dom"/>
</dbReference>
<dbReference type="InterPro" id="IPR036735">
    <property type="entry name" value="NGN_dom_sf"/>
</dbReference>
<dbReference type="InterPro" id="IPR043425">
    <property type="entry name" value="NusG-like"/>
</dbReference>
<dbReference type="InterPro" id="IPR014722">
    <property type="entry name" value="Rib_uL2_dom2"/>
</dbReference>
<dbReference type="InterPro" id="IPR001062">
    <property type="entry name" value="Transcrpt_antiterm_NusG"/>
</dbReference>
<dbReference type="InterPro" id="IPR015869">
    <property type="entry name" value="Transcrpt_antiterm_NusG_bac_CS"/>
</dbReference>
<dbReference type="InterPro" id="IPR008991">
    <property type="entry name" value="Translation_prot_SH3-like_sf"/>
</dbReference>
<dbReference type="NCBIfam" id="TIGR00922">
    <property type="entry name" value="nusG"/>
    <property type="match status" value="1"/>
</dbReference>
<dbReference type="PANTHER" id="PTHR30265">
    <property type="entry name" value="RHO-INTERACTING TRANSCRIPTION TERMINATION FACTOR NUSG"/>
    <property type="match status" value="1"/>
</dbReference>
<dbReference type="PANTHER" id="PTHR30265:SF2">
    <property type="entry name" value="TRANSCRIPTION TERMINATION_ANTITERMINATION PROTEIN NUSG"/>
    <property type="match status" value="1"/>
</dbReference>
<dbReference type="Pfam" id="PF00467">
    <property type="entry name" value="KOW"/>
    <property type="match status" value="1"/>
</dbReference>
<dbReference type="Pfam" id="PF02357">
    <property type="entry name" value="NusG"/>
    <property type="match status" value="1"/>
</dbReference>
<dbReference type="PRINTS" id="PR00338">
    <property type="entry name" value="NUSGTNSCPFCT"/>
</dbReference>
<dbReference type="SMART" id="SM00739">
    <property type="entry name" value="KOW"/>
    <property type="match status" value="1"/>
</dbReference>
<dbReference type="SMART" id="SM00738">
    <property type="entry name" value="NGN"/>
    <property type="match status" value="1"/>
</dbReference>
<dbReference type="SUPFAM" id="SSF82679">
    <property type="entry name" value="N-utilization substance G protein NusG, N-terminal domain"/>
    <property type="match status" value="1"/>
</dbReference>
<dbReference type="SUPFAM" id="SSF50104">
    <property type="entry name" value="Translation proteins SH3-like domain"/>
    <property type="match status" value="1"/>
</dbReference>
<dbReference type="PROSITE" id="PS01014">
    <property type="entry name" value="NUSG"/>
    <property type="match status" value="1"/>
</dbReference>
<evidence type="ECO:0000255" key="1">
    <source>
        <dbReference type="HAMAP-Rule" id="MF_00948"/>
    </source>
</evidence>
<protein>
    <recommendedName>
        <fullName evidence="1">Transcription termination/antitermination protein NusG</fullName>
    </recommendedName>
</protein>
<keyword id="KW-0804">Transcription</keyword>
<keyword id="KW-0889">Transcription antitermination</keyword>
<keyword id="KW-0805">Transcription regulation</keyword>
<keyword id="KW-0806">Transcription termination</keyword>
<name>NUSG_XYLFA</name>
<sequence length="185" mass="21208">MKRWYVVHAYSGFEKSVAQALRDRISRIEIQDRFGDVLVPAEEVVEMRSGQKRRSEHKFFPGYVLIQIETYYEGGVPRIDNECWHLVKETPKVMGFIGGTADRPLPISSDEADAILRRVQDGAEKPRPKVLFEPGQMVRVIDGPFNDFDGLVEEVNYEKNRLRVAVLIFGRPTPVDLEFGQVQKS</sequence>
<reference key="1">
    <citation type="journal article" date="2000" name="Nature">
        <title>The genome sequence of the plant pathogen Xylella fastidiosa.</title>
        <authorList>
            <person name="Simpson A.J.G."/>
            <person name="Reinach F.C."/>
            <person name="Arruda P."/>
            <person name="Abreu F.A."/>
            <person name="Acencio M."/>
            <person name="Alvarenga R."/>
            <person name="Alves L.M.C."/>
            <person name="Araya J.E."/>
            <person name="Baia G.S."/>
            <person name="Baptista C.S."/>
            <person name="Barros M.H."/>
            <person name="Bonaccorsi E.D."/>
            <person name="Bordin S."/>
            <person name="Bove J.M."/>
            <person name="Briones M.R.S."/>
            <person name="Bueno M.R.P."/>
            <person name="Camargo A.A."/>
            <person name="Camargo L.E.A."/>
            <person name="Carraro D.M."/>
            <person name="Carrer H."/>
            <person name="Colauto N.B."/>
            <person name="Colombo C."/>
            <person name="Costa F.F."/>
            <person name="Costa M.C.R."/>
            <person name="Costa-Neto C.M."/>
            <person name="Coutinho L.L."/>
            <person name="Cristofani M."/>
            <person name="Dias-Neto E."/>
            <person name="Docena C."/>
            <person name="El-Dorry H."/>
            <person name="Facincani A.P."/>
            <person name="Ferreira A.J.S."/>
            <person name="Ferreira V.C.A."/>
            <person name="Ferro J.A."/>
            <person name="Fraga J.S."/>
            <person name="Franca S.C."/>
            <person name="Franco M.C."/>
            <person name="Frohme M."/>
            <person name="Furlan L.R."/>
            <person name="Garnier M."/>
            <person name="Goldman G.H."/>
            <person name="Goldman M.H.S."/>
            <person name="Gomes S.L."/>
            <person name="Gruber A."/>
            <person name="Ho P.L."/>
            <person name="Hoheisel J.D."/>
            <person name="Junqueira M.L."/>
            <person name="Kemper E.L."/>
            <person name="Kitajima J.P."/>
            <person name="Krieger J.E."/>
            <person name="Kuramae E.E."/>
            <person name="Laigret F."/>
            <person name="Lambais M.R."/>
            <person name="Leite L.C.C."/>
            <person name="Lemos E.G.M."/>
            <person name="Lemos M.V.F."/>
            <person name="Lopes S.A."/>
            <person name="Lopes C.R."/>
            <person name="Machado J.A."/>
            <person name="Machado M.A."/>
            <person name="Madeira A.M.B.N."/>
            <person name="Madeira H.M.F."/>
            <person name="Marino C.L."/>
            <person name="Marques M.V."/>
            <person name="Martins E.A.L."/>
            <person name="Martins E.M.F."/>
            <person name="Matsukuma A.Y."/>
            <person name="Menck C.F.M."/>
            <person name="Miracca E.C."/>
            <person name="Miyaki C.Y."/>
            <person name="Monteiro-Vitorello C.B."/>
            <person name="Moon D.H."/>
            <person name="Nagai M.A."/>
            <person name="Nascimento A.L.T.O."/>
            <person name="Netto L.E.S."/>
            <person name="Nhani A. Jr."/>
            <person name="Nobrega F.G."/>
            <person name="Nunes L.R."/>
            <person name="Oliveira M.A."/>
            <person name="de Oliveira M.C."/>
            <person name="de Oliveira R.C."/>
            <person name="Palmieri D.A."/>
            <person name="Paris A."/>
            <person name="Peixoto B.R."/>
            <person name="Pereira G.A.G."/>
            <person name="Pereira H.A. Jr."/>
            <person name="Pesquero J.B."/>
            <person name="Quaggio R.B."/>
            <person name="Roberto P.G."/>
            <person name="Rodrigues V."/>
            <person name="de Rosa A.J.M."/>
            <person name="de Rosa V.E. Jr."/>
            <person name="de Sa R.G."/>
            <person name="Santelli R.V."/>
            <person name="Sawasaki H.E."/>
            <person name="da Silva A.C.R."/>
            <person name="da Silva A.M."/>
            <person name="da Silva F.R."/>
            <person name="Silva W.A. Jr."/>
            <person name="da Silveira J.F."/>
            <person name="Silvestri M.L.Z."/>
            <person name="Siqueira W.J."/>
            <person name="de Souza A.A."/>
            <person name="de Souza A.P."/>
            <person name="Terenzi M.F."/>
            <person name="Truffi D."/>
            <person name="Tsai S.M."/>
            <person name="Tsuhako M.H."/>
            <person name="Vallada H."/>
            <person name="Van Sluys M.A."/>
            <person name="Verjovski-Almeida S."/>
            <person name="Vettore A.L."/>
            <person name="Zago M.A."/>
            <person name="Zatz M."/>
            <person name="Meidanis J."/>
            <person name="Setubal J.C."/>
        </authorList>
    </citation>
    <scope>NUCLEOTIDE SEQUENCE [LARGE SCALE GENOMIC DNA]</scope>
    <source>
        <strain>9a5c</strain>
    </source>
</reference>
<feature type="chain" id="PRO_0000113971" description="Transcription termination/antitermination protein NusG">
    <location>
        <begin position="1"/>
        <end position="185"/>
    </location>
</feature>
<feature type="domain" description="KOW" evidence="1">
    <location>
        <begin position="134"/>
        <end position="162"/>
    </location>
</feature>
<accession>Q9PA81</accession>
<gene>
    <name evidence="1" type="primary">nusG</name>
    <name type="ordered locus">XF_2638</name>
</gene>